<protein>
    <recommendedName>
        <fullName evidence="10">Acetylserotonin O-methyltransferase</fullName>
        <ecNumber evidence="4">2.1.1.4</ecNumber>
    </recommendedName>
    <alternativeName>
        <fullName evidence="9">N-acetylserotonin O-methyltransferase</fullName>
        <shortName evidence="9">AtASMT</shortName>
    </alternativeName>
</protein>
<name>ASMT_ARATH</name>
<sequence>MSSDQLSKFLDRNKMEDNKRKVLDEEAKASLDIWKYVFGFADIAAAKCAIDLKIPEAIENHPSSQPVTLAELSSAVSASPSHLRRIMRFLVHQGIFKEIPTKDGLATGYVNTPLSRRLMITRRDGKSLAPFVLFETTPEMLAPWLRLSSVVSSPVNGSTPPPFDAVHGKDVWSFAQDNPFLSDMINEAMACDARRVVPRVAGACHGLFDGVTTMVDVGGGTGETMGMLVKEFPWIKGFNFDLPHVIEVAEVLDGVENVEGDMFDSIPACDAIFIKWVLHDWGDKDCIKILKNCKEAVPPNIGKVLIVESVIGENKKTMIVDERDEKLEHVRLMLDMVMMAHTSTGKERTLKEWDFVLKEAGFARYEVRDIDDVQSLIIAYRS</sequence>
<keyword id="KW-0963">Cytoplasm</keyword>
<keyword id="KW-0471">Melatonin biosynthesis</keyword>
<keyword id="KW-0489">Methyltransferase</keyword>
<keyword id="KW-1185">Reference proteome</keyword>
<keyword id="KW-0949">S-adenosyl-L-methionine</keyword>
<keyword id="KW-0808">Transferase</keyword>
<evidence type="ECO:0000250" key="1">
    <source>
        <dbReference type="UniProtKB" id="F1DBB3"/>
    </source>
</evidence>
<evidence type="ECO:0000250" key="2">
    <source>
        <dbReference type="UniProtKB" id="P28002"/>
    </source>
</evidence>
<evidence type="ECO:0000255" key="3">
    <source>
        <dbReference type="PROSITE-ProRule" id="PRU01020"/>
    </source>
</evidence>
<evidence type="ECO:0000269" key="4">
    <source>
    </source>
</evidence>
<evidence type="ECO:0000269" key="5">
    <source>
    </source>
</evidence>
<evidence type="ECO:0000269" key="6">
    <source>
    </source>
</evidence>
<evidence type="ECO:0000269" key="7">
    <source>
    </source>
</evidence>
<evidence type="ECO:0000269" key="8">
    <source>
    </source>
</evidence>
<evidence type="ECO:0000303" key="9">
    <source>
    </source>
</evidence>
<evidence type="ECO:0000305" key="10"/>
<evidence type="ECO:0000312" key="11">
    <source>
        <dbReference type="Araport" id="AT4G35160"/>
    </source>
</evidence>
<evidence type="ECO:0000312" key="12">
    <source>
        <dbReference type="EMBL" id="CAB36723.1"/>
    </source>
</evidence>
<comment type="function">
    <text evidence="4 5 6 8">Methyltransferase which catalyzes the transfer of a methyl group onto N-acetylserotonin, producing melatonin (N-acetyl-5-methoxytryptamine) (PubMed:26484897). Does not seem to possess caffeate O-methyltransferase activity (PubMed:26484897). Implicated in melatonin-dependent circadian dynamics of stomatal aperture to minimize night water loss and promote drought tolerance (PubMed:32064655). Prevents seed germination by promoting melatonin biosynthesis (PubMed:33811388). Promotes melatonin-triggered defense responses to the necrotrophic fungus Botrytis cinerea (PubMed:34234798).</text>
</comment>
<comment type="function">
    <text evidence="8">(Microbial infection) Promotes melatonin-triggered defense responses to the necrotrophic fungus Botrytis cinerea.</text>
</comment>
<comment type="catalytic activity">
    <reaction evidence="4">
        <text>N-acetylserotonin + S-adenosyl-L-methionine = melatonin + S-adenosyl-L-homocysteine + H(+)</text>
        <dbReference type="Rhea" id="RHEA:15573"/>
        <dbReference type="ChEBI" id="CHEBI:15378"/>
        <dbReference type="ChEBI" id="CHEBI:16796"/>
        <dbReference type="ChEBI" id="CHEBI:17697"/>
        <dbReference type="ChEBI" id="CHEBI:57856"/>
        <dbReference type="ChEBI" id="CHEBI:59789"/>
        <dbReference type="EC" id="2.1.1.4"/>
    </reaction>
</comment>
<comment type="biophysicochemical properties">
    <kinetics>
        <KM evidence="4">456 uM for N-acetylserotonin</KM>
        <KM evidence="4">1035 uM for serotonin</KM>
        <Vmax evidence="4">6.6 pmol/min/mg enzyme toward N-acetylserotonin</Vmax>
        <Vmax evidence="4">17.4 pmol/min/mg enzyme toward serotonin</Vmax>
    </kinetics>
</comment>
<comment type="pathway">
    <text evidence="10">Aromatic compound metabolism; melatonin biosynthesis; melatonin from serotonin: step 1/2.</text>
</comment>
<comment type="subcellular location">
    <subcellularLocation>
        <location evidence="4">Cytoplasm</location>
    </subcellularLocation>
</comment>
<comment type="induction">
    <text evidence="4 5 7">Expressed following a circadian rhythm with the highest level 4 hours into the light and the lowest level at the end of the night (PubMed:32064655). Induced by cadmium (PubMed:26484897). Induced by osmotic stress (PubMed:33924609).</text>
</comment>
<comment type="disruption phenotype">
    <text evidence="5 6 8">Altered circadian dynamics of stomatal aperture (PubMed:32064655). Promoted seed germination (PubMed:33811388). Increased susceptibility to Botrytis cinerea (PubMed:34234798).</text>
</comment>
<comment type="similarity">
    <text evidence="10">Belongs to the class I-like SAM-binding methyltransferase superfamily. Cation-independent O-methyltransferase family.</text>
</comment>
<reference key="1">
    <citation type="journal article" date="1999" name="Nature">
        <title>Sequence and analysis of chromosome 4 of the plant Arabidopsis thaliana.</title>
        <authorList>
            <person name="Mayer K.F.X."/>
            <person name="Schueller C."/>
            <person name="Wambutt R."/>
            <person name="Murphy G."/>
            <person name="Volckaert G."/>
            <person name="Pohl T."/>
            <person name="Duesterhoeft A."/>
            <person name="Stiekema W."/>
            <person name="Entian K.-D."/>
            <person name="Terryn N."/>
            <person name="Harris B."/>
            <person name="Ansorge W."/>
            <person name="Brandt P."/>
            <person name="Grivell L.A."/>
            <person name="Rieger M."/>
            <person name="Weichselgartner M."/>
            <person name="de Simone V."/>
            <person name="Obermaier B."/>
            <person name="Mache R."/>
            <person name="Mueller M."/>
            <person name="Kreis M."/>
            <person name="Delseny M."/>
            <person name="Puigdomenech P."/>
            <person name="Watson M."/>
            <person name="Schmidtheini T."/>
            <person name="Reichert B."/>
            <person name="Portetelle D."/>
            <person name="Perez-Alonso M."/>
            <person name="Boutry M."/>
            <person name="Bancroft I."/>
            <person name="Vos P."/>
            <person name="Hoheisel J."/>
            <person name="Zimmermann W."/>
            <person name="Wedler H."/>
            <person name="Ridley P."/>
            <person name="Langham S.-A."/>
            <person name="McCullagh B."/>
            <person name="Bilham L."/>
            <person name="Robben J."/>
            <person name="van der Schueren J."/>
            <person name="Grymonprez B."/>
            <person name="Chuang Y.-J."/>
            <person name="Vandenbussche F."/>
            <person name="Braeken M."/>
            <person name="Weltjens I."/>
            <person name="Voet M."/>
            <person name="Bastiaens I."/>
            <person name="Aert R."/>
            <person name="Defoor E."/>
            <person name="Weitzenegger T."/>
            <person name="Bothe G."/>
            <person name="Ramsperger U."/>
            <person name="Hilbert H."/>
            <person name="Braun M."/>
            <person name="Holzer E."/>
            <person name="Brandt A."/>
            <person name="Peters S."/>
            <person name="van Staveren M."/>
            <person name="Dirkse W."/>
            <person name="Mooijman P."/>
            <person name="Klein Lankhorst R."/>
            <person name="Rose M."/>
            <person name="Hauf J."/>
            <person name="Koetter P."/>
            <person name="Berneiser S."/>
            <person name="Hempel S."/>
            <person name="Feldpausch M."/>
            <person name="Lamberth S."/>
            <person name="Van den Daele H."/>
            <person name="De Keyser A."/>
            <person name="Buysshaert C."/>
            <person name="Gielen J."/>
            <person name="Villarroel R."/>
            <person name="De Clercq R."/>
            <person name="van Montagu M."/>
            <person name="Rogers J."/>
            <person name="Cronin A."/>
            <person name="Quail M.A."/>
            <person name="Bray-Allen S."/>
            <person name="Clark L."/>
            <person name="Doggett J."/>
            <person name="Hall S."/>
            <person name="Kay M."/>
            <person name="Lennard N."/>
            <person name="McLay K."/>
            <person name="Mayes R."/>
            <person name="Pettett A."/>
            <person name="Rajandream M.A."/>
            <person name="Lyne M."/>
            <person name="Benes V."/>
            <person name="Rechmann S."/>
            <person name="Borkova D."/>
            <person name="Bloecker H."/>
            <person name="Scharfe M."/>
            <person name="Grimm M."/>
            <person name="Loehnert T.-H."/>
            <person name="Dose S."/>
            <person name="de Haan M."/>
            <person name="Maarse A.C."/>
            <person name="Schaefer M."/>
            <person name="Mueller-Auer S."/>
            <person name="Gabel C."/>
            <person name="Fuchs M."/>
            <person name="Fartmann B."/>
            <person name="Granderath K."/>
            <person name="Dauner D."/>
            <person name="Herzl A."/>
            <person name="Neumann S."/>
            <person name="Argiriou A."/>
            <person name="Vitale D."/>
            <person name="Liguori R."/>
            <person name="Piravandi E."/>
            <person name="Massenet O."/>
            <person name="Quigley F."/>
            <person name="Clabauld G."/>
            <person name="Muendlein A."/>
            <person name="Felber R."/>
            <person name="Schnabl S."/>
            <person name="Hiller R."/>
            <person name="Schmidt W."/>
            <person name="Lecharny A."/>
            <person name="Aubourg S."/>
            <person name="Chefdor F."/>
            <person name="Cooke R."/>
            <person name="Berger C."/>
            <person name="Monfort A."/>
            <person name="Casacuberta E."/>
            <person name="Gibbons T."/>
            <person name="Weber N."/>
            <person name="Vandenbol M."/>
            <person name="Bargues M."/>
            <person name="Terol J."/>
            <person name="Torres A."/>
            <person name="Perez-Perez A."/>
            <person name="Purnelle B."/>
            <person name="Bent E."/>
            <person name="Johnson S."/>
            <person name="Tacon D."/>
            <person name="Jesse T."/>
            <person name="Heijnen L."/>
            <person name="Schwarz S."/>
            <person name="Scholler P."/>
            <person name="Heber S."/>
            <person name="Francs P."/>
            <person name="Bielke C."/>
            <person name="Frishman D."/>
            <person name="Haase D."/>
            <person name="Lemcke K."/>
            <person name="Mewes H.-W."/>
            <person name="Stocker S."/>
            <person name="Zaccaria P."/>
            <person name="Bevan M."/>
            <person name="Wilson R.K."/>
            <person name="de la Bastide M."/>
            <person name="Habermann K."/>
            <person name="Parnell L."/>
            <person name="Dedhia N."/>
            <person name="Gnoj L."/>
            <person name="Schutz K."/>
            <person name="Huang E."/>
            <person name="Spiegel L."/>
            <person name="Sekhon M."/>
            <person name="Murray J."/>
            <person name="Sheet P."/>
            <person name="Cordes M."/>
            <person name="Abu-Threideh J."/>
            <person name="Stoneking T."/>
            <person name="Kalicki J."/>
            <person name="Graves T."/>
            <person name="Harmon G."/>
            <person name="Edwards J."/>
            <person name="Latreille P."/>
            <person name="Courtney L."/>
            <person name="Cloud J."/>
            <person name="Abbott A."/>
            <person name="Scott K."/>
            <person name="Johnson D."/>
            <person name="Minx P."/>
            <person name="Bentley D."/>
            <person name="Fulton B."/>
            <person name="Miller N."/>
            <person name="Greco T."/>
            <person name="Kemp K."/>
            <person name="Kramer J."/>
            <person name="Fulton L."/>
            <person name="Mardis E."/>
            <person name="Dante M."/>
            <person name="Pepin K."/>
            <person name="Hillier L.W."/>
            <person name="Nelson J."/>
            <person name="Spieth J."/>
            <person name="Ryan E."/>
            <person name="Andrews S."/>
            <person name="Geisel C."/>
            <person name="Layman D."/>
            <person name="Du H."/>
            <person name="Ali J."/>
            <person name="Berghoff A."/>
            <person name="Jones K."/>
            <person name="Drone K."/>
            <person name="Cotton M."/>
            <person name="Joshu C."/>
            <person name="Antonoiu B."/>
            <person name="Zidanic M."/>
            <person name="Strong C."/>
            <person name="Sun H."/>
            <person name="Lamar B."/>
            <person name="Yordan C."/>
            <person name="Ma P."/>
            <person name="Zhong J."/>
            <person name="Preston R."/>
            <person name="Vil D."/>
            <person name="Shekher M."/>
            <person name="Matero A."/>
            <person name="Shah R."/>
            <person name="Swaby I.K."/>
            <person name="O'Shaughnessy A."/>
            <person name="Rodriguez M."/>
            <person name="Hoffman J."/>
            <person name="Till S."/>
            <person name="Granat S."/>
            <person name="Shohdy N."/>
            <person name="Hasegawa A."/>
            <person name="Hameed A."/>
            <person name="Lodhi M."/>
            <person name="Johnson A."/>
            <person name="Chen E."/>
            <person name="Marra M.A."/>
            <person name="Martienssen R."/>
            <person name="McCombie W.R."/>
        </authorList>
    </citation>
    <scope>NUCLEOTIDE SEQUENCE [LARGE SCALE GENOMIC DNA]</scope>
    <source>
        <strain>cv. Columbia</strain>
    </source>
</reference>
<reference key="2">
    <citation type="journal article" date="2017" name="Plant J.">
        <title>Araport11: a complete reannotation of the Arabidopsis thaliana reference genome.</title>
        <authorList>
            <person name="Cheng C.Y."/>
            <person name="Krishnakumar V."/>
            <person name="Chan A.P."/>
            <person name="Thibaud-Nissen F."/>
            <person name="Schobel S."/>
            <person name="Town C.D."/>
        </authorList>
    </citation>
    <scope>GENOME REANNOTATION</scope>
    <source>
        <strain>cv. Columbia</strain>
    </source>
</reference>
<reference key="3">
    <citation type="journal article" date="2003" name="Science">
        <title>Empirical analysis of transcriptional activity in the Arabidopsis genome.</title>
        <authorList>
            <person name="Yamada K."/>
            <person name="Lim J."/>
            <person name="Dale J.M."/>
            <person name="Chen H."/>
            <person name="Shinn P."/>
            <person name="Palm C.J."/>
            <person name="Southwick A.M."/>
            <person name="Wu H.C."/>
            <person name="Kim C.J."/>
            <person name="Nguyen M."/>
            <person name="Pham P.K."/>
            <person name="Cheuk R.F."/>
            <person name="Karlin-Newmann G."/>
            <person name="Liu S.X."/>
            <person name="Lam B."/>
            <person name="Sakano H."/>
            <person name="Wu T."/>
            <person name="Yu G."/>
            <person name="Miranda M."/>
            <person name="Quach H.L."/>
            <person name="Tripp M."/>
            <person name="Chang C.H."/>
            <person name="Lee J.M."/>
            <person name="Toriumi M.J."/>
            <person name="Chan M.M."/>
            <person name="Tang C.C."/>
            <person name="Onodera C.S."/>
            <person name="Deng J.M."/>
            <person name="Akiyama K."/>
            <person name="Ansari Y."/>
            <person name="Arakawa T."/>
            <person name="Banh J."/>
            <person name="Banno F."/>
            <person name="Bowser L."/>
            <person name="Brooks S.Y."/>
            <person name="Carninci P."/>
            <person name="Chao Q."/>
            <person name="Choy N."/>
            <person name="Enju A."/>
            <person name="Goldsmith A.D."/>
            <person name="Gurjal M."/>
            <person name="Hansen N.F."/>
            <person name="Hayashizaki Y."/>
            <person name="Johnson-Hopson C."/>
            <person name="Hsuan V.W."/>
            <person name="Iida K."/>
            <person name="Karnes M."/>
            <person name="Khan S."/>
            <person name="Koesema E."/>
            <person name="Ishida J."/>
            <person name="Jiang P.X."/>
            <person name="Jones T."/>
            <person name="Kawai J."/>
            <person name="Kamiya A."/>
            <person name="Meyers C."/>
            <person name="Nakajima M."/>
            <person name="Narusaka M."/>
            <person name="Seki M."/>
            <person name="Sakurai T."/>
            <person name="Satou M."/>
            <person name="Tamse R."/>
            <person name="Vaysberg M."/>
            <person name="Wallender E.K."/>
            <person name="Wong C."/>
            <person name="Yamamura Y."/>
            <person name="Yuan S."/>
            <person name="Shinozaki K."/>
            <person name="Davis R.W."/>
            <person name="Theologis A."/>
            <person name="Ecker J.R."/>
        </authorList>
    </citation>
    <scope>NUCLEOTIDE SEQUENCE [LARGE SCALE MRNA]</scope>
    <source>
        <strain>cv. Columbia</strain>
    </source>
</reference>
<reference key="4">
    <citation type="journal article" date="2016" name="J. Pineal Res.">
        <title>Cloning and functional characterization of the Arabidopsis N-acetylserotonin O-methyltransferase responsible for melatonin synthesis.</title>
        <authorList>
            <person name="Byeon Y."/>
            <person name="Lee H.J."/>
            <person name="Lee H.Y."/>
            <person name="Back K."/>
        </authorList>
    </citation>
    <scope>FUNCTION</scope>
    <scope>CATALYTIC ACTIVITY</scope>
    <scope>BIOPHYSICOCHEMICAL PROPERTIES</scope>
    <scope>SUBCELLULAR LOCATION</scope>
    <scope>INDUCTION BY CADMIUM</scope>
</reference>
<reference key="5">
    <citation type="journal article" date="2016" name="J. Pineal Res.">
        <title>Melatonin biosynthesis in plants: multiple pathways catalyze tryptophan to melatonin in the cytoplasm or chloroplasts.</title>
        <authorList>
            <person name="Back K."/>
            <person name="Tan D.-X."/>
            <person name="Reiter R.J."/>
        </authorList>
    </citation>
    <scope>REVIEW ON MELATONIN BIOSYNTHESIS</scope>
</reference>
<reference key="6">
    <citation type="journal article" date="2020" name="J. Pineal Res.">
        <title>Daily rhythms of phytomelatonin signaling modulate diurnal stomatal closure via regulating reactive oxygen species dynamics in Arabidopsis.</title>
        <authorList>
            <person name="Li D."/>
            <person name="Wei J."/>
            <person name="Peng Z."/>
            <person name="Ma W."/>
            <person name="Yang Q."/>
            <person name="Song Z."/>
            <person name="Sun W."/>
            <person name="Yang W."/>
            <person name="Yuan L."/>
            <person name="Xu X."/>
            <person name="Chang W."/>
            <person name="Rengel Z."/>
            <person name="Shen J."/>
            <person name="Reiter R.J."/>
            <person name="Cui X."/>
            <person name="Yu D."/>
            <person name="Chen Q."/>
        </authorList>
    </citation>
    <scope>FUNCTION</scope>
    <scope>DISRUPTION PHENOTYPE</scope>
    <scope>INDUCTION</scope>
    <source>
        <strain>cv. Columbia</strain>
    </source>
</reference>
<reference key="7">
    <citation type="journal article" date="2021" name="Front. Plant Sci.">
        <title>Roles of endogenous melatonin in resistance to Botrytis cinerea infection in an Arabidopsis model.</title>
        <authorList>
            <person name="Zhu Y."/>
            <person name="Guo M.-J."/>
            <person name="Song J.-B."/>
            <person name="Zhang S.-Y."/>
            <person name="Guo R."/>
            <person name="Hou D.-R."/>
            <person name="Hao C.-Y."/>
            <person name="An H.-L."/>
            <person name="Huang X."/>
        </authorList>
    </citation>
    <scope>FUNCTION (MICROBIAL INFECTION)</scope>
    <scope>DISRUPTION PHENOTYPE</scope>
    <source>
        <strain>cv. Columbia</strain>
    </source>
</reference>
<reference key="8">
    <citation type="journal article" date="2021" name="Int. J. Mol. Sci.">
        <title>CAND2/PMTR1 is required for melatonin-conferred osmotic stress tolerance in Arabidopsis.</title>
        <authorList>
            <person name="Wang L.-F."/>
            <person name="Li T.-T."/>
            <person name="Zhang Y."/>
            <person name="Guo J.-X."/>
            <person name="Lu K.-K."/>
            <person name="Liu W.-C."/>
        </authorList>
    </citation>
    <scope>INDUCTION BY OSMOTIC STRESS</scope>
    <source>
        <strain>cv. Columbia</strain>
    </source>
</reference>
<reference key="9">
    <citation type="journal article" date="2021" name="J. Pineal Res.">
        <title>Melatonin inhibits seed germination by crosstalk with abscisic acid, gibberellin, and auxin in Arabidopsis.</title>
        <authorList>
            <person name="Lv Y."/>
            <person name="Pan J."/>
            <person name="Wang H."/>
            <person name="Reiter R.J."/>
            <person name="Li X."/>
            <person name="Mou Z."/>
            <person name="Zhang J."/>
            <person name="Yao Z."/>
            <person name="Zhao D."/>
            <person name="Yu D."/>
        </authorList>
    </citation>
    <scope>FUNCTION</scope>
    <scope>DISRUPTION PHENOTYPE</scope>
    <source>
        <strain>cv. Columbia</strain>
        <strain>cv. Landsberg erecta</strain>
        <strain>cv. Wassilewskija</strain>
    </source>
</reference>
<dbReference type="EC" id="2.1.1.4" evidence="4"/>
<dbReference type="EMBL" id="AL035522">
    <property type="protein sequence ID" value="CAB36723.1"/>
    <property type="molecule type" value="Genomic_DNA"/>
</dbReference>
<dbReference type="EMBL" id="AL161586">
    <property type="protein sequence ID" value="CAB80233.1"/>
    <property type="molecule type" value="Genomic_DNA"/>
</dbReference>
<dbReference type="EMBL" id="CP002687">
    <property type="protein sequence ID" value="AEE86474.1"/>
    <property type="molecule type" value="Genomic_DNA"/>
</dbReference>
<dbReference type="EMBL" id="AY099803">
    <property type="protein sequence ID" value="AAM20654.1"/>
    <property type="molecule type" value="mRNA"/>
</dbReference>
<dbReference type="EMBL" id="BT000302">
    <property type="protein sequence ID" value="AAN15621.1"/>
    <property type="molecule type" value="mRNA"/>
</dbReference>
<dbReference type="PIR" id="T04963">
    <property type="entry name" value="T04963"/>
</dbReference>
<dbReference type="RefSeq" id="NP_195242.1">
    <property type="nucleotide sequence ID" value="NM_119682.4"/>
</dbReference>
<dbReference type="SMR" id="Q9T003"/>
<dbReference type="FunCoup" id="Q9T003">
    <property type="interactions" value="579"/>
</dbReference>
<dbReference type="IntAct" id="Q9T003">
    <property type="interactions" value="3"/>
</dbReference>
<dbReference type="STRING" id="3702.Q9T003"/>
<dbReference type="PaxDb" id="3702-AT4G35160.1"/>
<dbReference type="ProteomicsDB" id="246800"/>
<dbReference type="EnsemblPlants" id="AT4G35160.1">
    <property type="protein sequence ID" value="AT4G35160.1"/>
    <property type="gene ID" value="AT4G35160"/>
</dbReference>
<dbReference type="GeneID" id="829668"/>
<dbReference type="Gramene" id="AT4G35160.1">
    <property type="protein sequence ID" value="AT4G35160.1"/>
    <property type="gene ID" value="AT4G35160"/>
</dbReference>
<dbReference type="KEGG" id="ath:AT4G35160"/>
<dbReference type="Araport" id="AT4G35160"/>
<dbReference type="TAIR" id="AT4G35160">
    <property type="gene designation" value="ASMT"/>
</dbReference>
<dbReference type="eggNOG" id="KOG3178">
    <property type="taxonomic scope" value="Eukaryota"/>
</dbReference>
<dbReference type="HOGENOM" id="CLU_005533_7_0_1"/>
<dbReference type="InParanoid" id="Q9T003"/>
<dbReference type="OMA" id="MMMTANG"/>
<dbReference type="OrthoDB" id="1606438at2759"/>
<dbReference type="PhylomeDB" id="Q9T003"/>
<dbReference type="BioCyc" id="ARA:AT4G35160-MONOMER"/>
<dbReference type="BRENDA" id="2.1.1.4">
    <property type="organism ID" value="399"/>
</dbReference>
<dbReference type="UniPathway" id="UPA00837">
    <property type="reaction ID" value="UER00815"/>
</dbReference>
<dbReference type="PRO" id="PR:Q9T003"/>
<dbReference type="Proteomes" id="UP000006548">
    <property type="component" value="Chromosome 4"/>
</dbReference>
<dbReference type="ExpressionAtlas" id="Q9T003">
    <property type="expression patterns" value="baseline and differential"/>
</dbReference>
<dbReference type="GO" id="GO:0005737">
    <property type="term" value="C:cytoplasm"/>
    <property type="evidence" value="ECO:0000314"/>
    <property type="project" value="TAIR"/>
</dbReference>
<dbReference type="GO" id="GO:0017096">
    <property type="term" value="F:acetylserotonin O-methyltransferase activity"/>
    <property type="evidence" value="ECO:0000314"/>
    <property type="project" value="TAIR"/>
</dbReference>
<dbReference type="GO" id="GO:0046983">
    <property type="term" value="F:protein dimerization activity"/>
    <property type="evidence" value="ECO:0007669"/>
    <property type="project" value="InterPro"/>
</dbReference>
<dbReference type="GO" id="GO:0007623">
    <property type="term" value="P:circadian rhythm"/>
    <property type="evidence" value="ECO:0000270"/>
    <property type="project" value="UniProtKB"/>
</dbReference>
<dbReference type="GO" id="GO:0050832">
    <property type="term" value="P:defense response to fungus"/>
    <property type="evidence" value="ECO:0000315"/>
    <property type="project" value="UniProtKB"/>
</dbReference>
<dbReference type="GO" id="GO:0030187">
    <property type="term" value="P:melatonin biosynthetic process"/>
    <property type="evidence" value="ECO:0000314"/>
    <property type="project" value="TAIR"/>
</dbReference>
<dbReference type="GO" id="GO:0032259">
    <property type="term" value="P:methylation"/>
    <property type="evidence" value="ECO:0007669"/>
    <property type="project" value="UniProtKB-KW"/>
</dbReference>
<dbReference type="GO" id="GO:0010187">
    <property type="term" value="P:negative regulation of seed germination"/>
    <property type="evidence" value="ECO:0000315"/>
    <property type="project" value="UniProtKB"/>
</dbReference>
<dbReference type="GO" id="GO:0090333">
    <property type="term" value="P:regulation of stomatal closure"/>
    <property type="evidence" value="ECO:0000315"/>
    <property type="project" value="UniProtKB"/>
</dbReference>
<dbReference type="GO" id="GO:0010555">
    <property type="term" value="P:response to mannitol"/>
    <property type="evidence" value="ECO:0000270"/>
    <property type="project" value="UniProtKB"/>
</dbReference>
<dbReference type="GO" id="GO:0006970">
    <property type="term" value="P:response to osmotic stress"/>
    <property type="evidence" value="ECO:0000270"/>
    <property type="project" value="UniProtKB"/>
</dbReference>
<dbReference type="FunFam" id="1.10.10.10:FF:000836">
    <property type="entry name" value="O-methyltransferase family protein"/>
    <property type="match status" value="1"/>
</dbReference>
<dbReference type="FunFam" id="3.40.50.150:FF:000294">
    <property type="entry name" value="O-methyltransferase family protein"/>
    <property type="match status" value="1"/>
</dbReference>
<dbReference type="Gene3D" id="3.40.50.150">
    <property type="entry name" value="Vaccinia Virus protein VP39"/>
    <property type="match status" value="1"/>
</dbReference>
<dbReference type="Gene3D" id="1.10.10.10">
    <property type="entry name" value="Winged helix-like DNA-binding domain superfamily/Winged helix DNA-binding domain"/>
    <property type="match status" value="1"/>
</dbReference>
<dbReference type="InterPro" id="IPR016461">
    <property type="entry name" value="COMT-like"/>
</dbReference>
<dbReference type="InterPro" id="IPR001077">
    <property type="entry name" value="O_MeTrfase_dom"/>
</dbReference>
<dbReference type="InterPro" id="IPR012967">
    <property type="entry name" value="Plant_O-MeTrfase_dimerisation"/>
</dbReference>
<dbReference type="InterPro" id="IPR029063">
    <property type="entry name" value="SAM-dependent_MTases_sf"/>
</dbReference>
<dbReference type="InterPro" id="IPR036388">
    <property type="entry name" value="WH-like_DNA-bd_sf"/>
</dbReference>
<dbReference type="InterPro" id="IPR036390">
    <property type="entry name" value="WH_DNA-bd_sf"/>
</dbReference>
<dbReference type="PANTHER" id="PTHR11746">
    <property type="entry name" value="O-METHYLTRANSFERASE"/>
    <property type="match status" value="1"/>
</dbReference>
<dbReference type="Pfam" id="PF08100">
    <property type="entry name" value="Dimerisation"/>
    <property type="match status" value="1"/>
</dbReference>
<dbReference type="Pfam" id="PF00891">
    <property type="entry name" value="Methyltransf_2"/>
    <property type="match status" value="1"/>
</dbReference>
<dbReference type="PIRSF" id="PIRSF005739">
    <property type="entry name" value="O-mtase"/>
    <property type="match status" value="1"/>
</dbReference>
<dbReference type="SUPFAM" id="SSF53335">
    <property type="entry name" value="S-adenosyl-L-methionine-dependent methyltransferases"/>
    <property type="match status" value="1"/>
</dbReference>
<dbReference type="SUPFAM" id="SSF46785">
    <property type="entry name" value="Winged helix' DNA-binding domain"/>
    <property type="match status" value="1"/>
</dbReference>
<dbReference type="PROSITE" id="PS51683">
    <property type="entry name" value="SAM_OMT_II"/>
    <property type="match status" value="1"/>
</dbReference>
<organism>
    <name type="scientific">Arabidopsis thaliana</name>
    <name type="common">Mouse-ear cress</name>
    <dbReference type="NCBI Taxonomy" id="3702"/>
    <lineage>
        <taxon>Eukaryota</taxon>
        <taxon>Viridiplantae</taxon>
        <taxon>Streptophyta</taxon>
        <taxon>Embryophyta</taxon>
        <taxon>Tracheophyta</taxon>
        <taxon>Spermatophyta</taxon>
        <taxon>Magnoliopsida</taxon>
        <taxon>eudicotyledons</taxon>
        <taxon>Gunneridae</taxon>
        <taxon>Pentapetalae</taxon>
        <taxon>rosids</taxon>
        <taxon>malvids</taxon>
        <taxon>Brassicales</taxon>
        <taxon>Brassicaceae</taxon>
        <taxon>Camelineae</taxon>
        <taxon>Arabidopsis</taxon>
    </lineage>
</organism>
<accession>Q9T003</accession>
<feature type="chain" id="PRO_0000442916" description="Acetylserotonin O-methyltransferase">
    <location>
        <begin position="1"/>
        <end position="382"/>
    </location>
</feature>
<feature type="active site" description="Proton acceptor" evidence="3">
    <location>
        <position position="279"/>
    </location>
</feature>
<feature type="active site" evidence="1">
    <location>
        <position position="308"/>
    </location>
</feature>
<feature type="active site" evidence="1">
    <location>
        <position position="347"/>
    </location>
</feature>
<feature type="binding site" evidence="2">
    <location>
        <position position="218"/>
    </location>
    <ligand>
        <name>S-adenosyl-L-homocysteine</name>
        <dbReference type="ChEBI" id="CHEBI:57856"/>
    </ligand>
</feature>
<feature type="binding site" evidence="2">
    <location>
        <position position="241"/>
    </location>
    <ligand>
        <name>S-adenosyl-L-homocysteine</name>
        <dbReference type="ChEBI" id="CHEBI:57856"/>
    </ligand>
</feature>
<feature type="binding site" evidence="2">
    <location>
        <position position="261"/>
    </location>
    <ligand>
        <name>S-adenosyl-L-homocysteine</name>
        <dbReference type="ChEBI" id="CHEBI:57856"/>
    </ligand>
</feature>
<feature type="binding site" evidence="2">
    <location>
        <position position="262"/>
    </location>
    <ligand>
        <name>S-adenosyl-L-homocysteine</name>
        <dbReference type="ChEBI" id="CHEBI:57856"/>
    </ligand>
</feature>
<feature type="binding site" evidence="2">
    <location>
        <position position="275"/>
    </location>
    <ligand>
        <name>S-adenosyl-L-homocysteine</name>
        <dbReference type="ChEBI" id="CHEBI:57856"/>
    </ligand>
</feature>
<gene>
    <name evidence="9" type="primary">ASMT</name>
    <name evidence="11" type="ordered locus">At4g35160</name>
    <name evidence="12" type="ORF">T12J5.30</name>
</gene>
<proteinExistence type="evidence at protein level"/>